<gene>
    <name type="ordered locus">HEAR2885</name>
</gene>
<feature type="chain" id="PRO_1000056826" description="Nucleotide-binding protein HEAR2885">
    <location>
        <begin position="1"/>
        <end position="287"/>
    </location>
</feature>
<feature type="binding site" evidence="1">
    <location>
        <begin position="8"/>
        <end position="15"/>
    </location>
    <ligand>
        <name>ATP</name>
        <dbReference type="ChEBI" id="CHEBI:30616"/>
    </ligand>
</feature>
<feature type="binding site" evidence="1">
    <location>
        <begin position="57"/>
        <end position="60"/>
    </location>
    <ligand>
        <name>GTP</name>
        <dbReference type="ChEBI" id="CHEBI:37565"/>
    </ligand>
</feature>
<protein>
    <recommendedName>
        <fullName evidence="1">Nucleotide-binding protein HEAR2885</fullName>
    </recommendedName>
</protein>
<keyword id="KW-0067">ATP-binding</keyword>
<keyword id="KW-0342">GTP-binding</keyword>
<keyword id="KW-0547">Nucleotide-binding</keyword>
<keyword id="KW-1185">Reference proteome</keyword>
<reference key="1">
    <citation type="journal article" date="2007" name="PLoS Genet.">
        <title>A tale of two oxidation states: bacterial colonization of arsenic-rich environments.</title>
        <authorList>
            <person name="Muller D."/>
            <person name="Medigue C."/>
            <person name="Koechler S."/>
            <person name="Barbe V."/>
            <person name="Barakat M."/>
            <person name="Talla E."/>
            <person name="Bonnefoy V."/>
            <person name="Krin E."/>
            <person name="Arsene-Ploetze F."/>
            <person name="Carapito C."/>
            <person name="Chandler M."/>
            <person name="Cournoyer B."/>
            <person name="Cruveiller S."/>
            <person name="Dossat C."/>
            <person name="Duval S."/>
            <person name="Heymann M."/>
            <person name="Leize E."/>
            <person name="Lieutaud A."/>
            <person name="Lievremont D."/>
            <person name="Makita Y."/>
            <person name="Mangenot S."/>
            <person name="Nitschke W."/>
            <person name="Ortet P."/>
            <person name="Perdrial N."/>
            <person name="Schoepp B."/>
            <person name="Siguier P."/>
            <person name="Simeonova D.D."/>
            <person name="Rouy Z."/>
            <person name="Segurens B."/>
            <person name="Turlin E."/>
            <person name="Vallenet D."/>
            <person name="van Dorsselaer A."/>
            <person name="Weiss S."/>
            <person name="Weissenbach J."/>
            <person name="Lett M.-C."/>
            <person name="Danchin A."/>
            <person name="Bertin P.N."/>
        </authorList>
    </citation>
    <scope>NUCLEOTIDE SEQUENCE [LARGE SCALE GENOMIC DNA]</scope>
    <source>
        <strain>ULPAs1</strain>
    </source>
</reference>
<evidence type="ECO:0000255" key="1">
    <source>
        <dbReference type="HAMAP-Rule" id="MF_00636"/>
    </source>
</evidence>
<dbReference type="EMBL" id="CU207211">
    <property type="protein sequence ID" value="CAL62999.1"/>
    <property type="molecule type" value="Genomic_DNA"/>
</dbReference>
<dbReference type="SMR" id="A4G912"/>
<dbReference type="STRING" id="204773.HEAR2885"/>
<dbReference type="KEGG" id="har:HEAR2885"/>
<dbReference type="eggNOG" id="COG1660">
    <property type="taxonomic scope" value="Bacteria"/>
</dbReference>
<dbReference type="HOGENOM" id="CLU_059558_1_1_4"/>
<dbReference type="OrthoDB" id="9784461at2"/>
<dbReference type="Proteomes" id="UP000006697">
    <property type="component" value="Chromosome"/>
</dbReference>
<dbReference type="GO" id="GO:0005524">
    <property type="term" value="F:ATP binding"/>
    <property type="evidence" value="ECO:0007669"/>
    <property type="project" value="UniProtKB-UniRule"/>
</dbReference>
<dbReference type="GO" id="GO:0005525">
    <property type="term" value="F:GTP binding"/>
    <property type="evidence" value="ECO:0007669"/>
    <property type="project" value="UniProtKB-UniRule"/>
</dbReference>
<dbReference type="Gene3D" id="3.40.50.300">
    <property type="entry name" value="P-loop containing nucleotide triphosphate hydrolases"/>
    <property type="match status" value="1"/>
</dbReference>
<dbReference type="HAMAP" id="MF_00636">
    <property type="entry name" value="RapZ_like"/>
    <property type="match status" value="1"/>
</dbReference>
<dbReference type="InterPro" id="IPR027417">
    <property type="entry name" value="P-loop_NTPase"/>
</dbReference>
<dbReference type="InterPro" id="IPR005337">
    <property type="entry name" value="RapZ-like"/>
</dbReference>
<dbReference type="InterPro" id="IPR053930">
    <property type="entry name" value="RapZ-like_N"/>
</dbReference>
<dbReference type="InterPro" id="IPR053931">
    <property type="entry name" value="RapZ_C"/>
</dbReference>
<dbReference type="NCBIfam" id="NF003828">
    <property type="entry name" value="PRK05416.1"/>
    <property type="match status" value="1"/>
</dbReference>
<dbReference type="PANTHER" id="PTHR30448">
    <property type="entry name" value="RNASE ADAPTER PROTEIN RAPZ"/>
    <property type="match status" value="1"/>
</dbReference>
<dbReference type="PANTHER" id="PTHR30448:SF0">
    <property type="entry name" value="RNASE ADAPTER PROTEIN RAPZ"/>
    <property type="match status" value="1"/>
</dbReference>
<dbReference type="Pfam" id="PF22740">
    <property type="entry name" value="PapZ_C"/>
    <property type="match status" value="1"/>
</dbReference>
<dbReference type="Pfam" id="PF03668">
    <property type="entry name" value="RapZ-like_N"/>
    <property type="match status" value="1"/>
</dbReference>
<dbReference type="PIRSF" id="PIRSF005052">
    <property type="entry name" value="P-loopkin"/>
    <property type="match status" value="1"/>
</dbReference>
<dbReference type="SUPFAM" id="SSF52540">
    <property type="entry name" value="P-loop containing nucleoside triphosphate hydrolases"/>
    <property type="match status" value="1"/>
</dbReference>
<accession>A4G912</accession>
<organism>
    <name type="scientific">Herminiimonas arsenicoxydans</name>
    <dbReference type="NCBI Taxonomy" id="204773"/>
    <lineage>
        <taxon>Bacteria</taxon>
        <taxon>Pseudomonadati</taxon>
        <taxon>Pseudomonadota</taxon>
        <taxon>Betaproteobacteria</taxon>
        <taxon>Burkholderiales</taxon>
        <taxon>Oxalobacteraceae</taxon>
        <taxon>Herminiimonas</taxon>
    </lineage>
</organism>
<proteinExistence type="inferred from homology"/>
<comment type="function">
    <text evidence="1">Displays ATPase and GTPase activities.</text>
</comment>
<comment type="similarity">
    <text evidence="1">Belongs to the RapZ-like family.</text>
</comment>
<name>Y2885_HERAR</name>
<sequence>MRIILITGISGSGKSVGLKALEDAGYFCVDNLPPTLLRALVTERLEEHGTTLAVSMDVRSASSLIGLPADLAWLRSQGHDVKVLFLTAKTDSLIARFSETRRSHPLSHRGFASDSTAERRTLTECIHEEREMLAGIEEIGHVIDTSGMRANKLRAWIKGLVESDHSPLTILFESFAFKFGVPLDADLVFDVRTLPNPHYDEALRPLTGRDAPVQDFLQTQPDATALLADIRGFVEKWLPAFKNDNRGYLTVAIGCTGGQHRSVYIVEQLAQYFRPTEHVLVRHRELD</sequence>